<dbReference type="EMBL" id="AE016815">
    <property type="protein sequence ID" value="AAS50566.1"/>
    <property type="molecule type" value="Genomic_DNA"/>
</dbReference>
<dbReference type="RefSeq" id="NP_982742.1">
    <property type="nucleotide sequence ID" value="NM_208095.1"/>
</dbReference>
<dbReference type="SMR" id="Q75E78"/>
<dbReference type="FunCoup" id="Q75E78">
    <property type="interactions" value="384"/>
</dbReference>
<dbReference type="STRING" id="284811.Q75E78"/>
<dbReference type="EnsemblFungi" id="AAS50566">
    <property type="protein sequence ID" value="AAS50566"/>
    <property type="gene ID" value="AGOS_ABL205C"/>
</dbReference>
<dbReference type="GeneID" id="4618821"/>
<dbReference type="KEGG" id="ago:AGOS_ABL205C"/>
<dbReference type="eggNOG" id="KOG2439">
    <property type="taxonomic scope" value="Eukaryota"/>
</dbReference>
<dbReference type="HOGENOM" id="CLU_018240_0_1_1"/>
<dbReference type="InParanoid" id="Q75E78"/>
<dbReference type="OMA" id="VMPCTCK"/>
<dbReference type="OrthoDB" id="10253113at2759"/>
<dbReference type="Proteomes" id="UP000000591">
    <property type="component" value="Chromosome II"/>
</dbReference>
<dbReference type="GO" id="GO:0097361">
    <property type="term" value="C:cytosolic [4Fe-4S] assembly targeting complex"/>
    <property type="evidence" value="ECO:0000318"/>
    <property type="project" value="GO_Central"/>
</dbReference>
<dbReference type="GO" id="GO:0016020">
    <property type="term" value="C:membrane"/>
    <property type="evidence" value="ECO:0007669"/>
    <property type="project" value="EnsemblFungi"/>
</dbReference>
<dbReference type="GO" id="GO:0051539">
    <property type="term" value="F:4 iron, 4 sulfur cluster binding"/>
    <property type="evidence" value="ECO:0007669"/>
    <property type="project" value="UniProtKB-KW"/>
</dbReference>
<dbReference type="GO" id="GO:0051536">
    <property type="term" value="F:iron-sulfur cluster binding"/>
    <property type="evidence" value="ECO:0000250"/>
    <property type="project" value="UniProtKB"/>
</dbReference>
<dbReference type="GO" id="GO:0046872">
    <property type="term" value="F:metal ion binding"/>
    <property type="evidence" value="ECO:0007669"/>
    <property type="project" value="UniProtKB-KW"/>
</dbReference>
<dbReference type="GO" id="GO:0016226">
    <property type="term" value="P:iron-sulfur cluster assembly"/>
    <property type="evidence" value="ECO:0000250"/>
    <property type="project" value="UniProtKB"/>
</dbReference>
<dbReference type="Gene3D" id="3.40.50.1780">
    <property type="match status" value="1"/>
</dbReference>
<dbReference type="Gene3D" id="3.40.950.10">
    <property type="entry name" value="Fe-only Hydrogenase (Larger Subunit), Chain L, domain 3"/>
    <property type="match status" value="1"/>
</dbReference>
<dbReference type="InterPro" id="IPR050340">
    <property type="entry name" value="Cytosolic_Fe-S_CAF"/>
</dbReference>
<dbReference type="InterPro" id="IPR009016">
    <property type="entry name" value="Fe_hydrogenase"/>
</dbReference>
<dbReference type="InterPro" id="IPR004108">
    <property type="entry name" value="Fe_hydrogenase_lsu_C"/>
</dbReference>
<dbReference type="PANTHER" id="PTHR11615">
    <property type="entry name" value="NITRATE, FORMATE, IRON DEHYDROGENASE"/>
    <property type="match status" value="1"/>
</dbReference>
<dbReference type="Pfam" id="PF02906">
    <property type="entry name" value="Fe_hyd_lg_C"/>
    <property type="match status" value="1"/>
</dbReference>
<dbReference type="SUPFAM" id="SSF53920">
    <property type="entry name" value="Fe-only hydrogenase"/>
    <property type="match status" value="1"/>
</dbReference>
<reference key="1">
    <citation type="journal article" date="2004" name="Science">
        <title>The Ashbya gossypii genome as a tool for mapping the ancient Saccharomyces cerevisiae genome.</title>
        <authorList>
            <person name="Dietrich F.S."/>
            <person name="Voegeli S."/>
            <person name="Brachat S."/>
            <person name="Lerch A."/>
            <person name="Gates K."/>
            <person name="Steiner S."/>
            <person name="Mohr C."/>
            <person name="Poehlmann R."/>
            <person name="Luedi P."/>
            <person name="Choi S."/>
            <person name="Wing R.A."/>
            <person name="Flavier A."/>
            <person name="Gaffney T.D."/>
            <person name="Philippsen P."/>
        </authorList>
    </citation>
    <scope>NUCLEOTIDE SEQUENCE [LARGE SCALE GENOMIC DNA]</scope>
    <source>
        <strain>ATCC 10895 / CBS 109.51 / FGSC 9923 / NRRL Y-1056</strain>
    </source>
</reference>
<reference key="2">
    <citation type="journal article" date="2013" name="G3 (Bethesda)">
        <title>Genomes of Ashbya fungi isolated from insects reveal four mating-type loci, numerous translocations, lack of transposons, and distinct gene duplications.</title>
        <authorList>
            <person name="Dietrich F.S."/>
            <person name="Voegeli S."/>
            <person name="Kuo S."/>
            <person name="Philippsen P."/>
        </authorList>
    </citation>
    <scope>GENOME REANNOTATION</scope>
    <source>
        <strain>ATCC 10895 / CBS 109.51 / FGSC 9923 / NRRL Y-1056</strain>
    </source>
</reference>
<proteinExistence type="inferred from homology"/>
<protein>
    <recommendedName>
        <fullName>Cytosolic Fe-S cluster assembly factor NAR1</fullName>
    </recommendedName>
    <alternativeName>
        <fullName>Nuclear architecture-related protein 1</fullName>
    </alternativeName>
</protein>
<organism>
    <name type="scientific">Eremothecium gossypii (strain ATCC 10895 / CBS 109.51 / FGSC 9923 / NRRL Y-1056)</name>
    <name type="common">Yeast</name>
    <name type="synonym">Ashbya gossypii</name>
    <dbReference type="NCBI Taxonomy" id="284811"/>
    <lineage>
        <taxon>Eukaryota</taxon>
        <taxon>Fungi</taxon>
        <taxon>Dikarya</taxon>
        <taxon>Ascomycota</taxon>
        <taxon>Saccharomycotina</taxon>
        <taxon>Saccharomycetes</taxon>
        <taxon>Saccharomycetales</taxon>
        <taxon>Saccharomycetaceae</taxon>
        <taxon>Eremothecium</taxon>
    </lineage>
</organism>
<accession>Q75E78</accession>
<feature type="chain" id="PRO_0000383712" description="Cytosolic Fe-S cluster assembly factor NAR1">
    <location>
        <begin position="1"/>
        <end position="451"/>
    </location>
</feature>
<feature type="binding site" evidence="2">
    <location>
        <position position="20"/>
    </location>
    <ligand>
        <name>[4Fe-4S] cluster</name>
        <dbReference type="ChEBI" id="CHEBI:49883"/>
        <label>1</label>
    </ligand>
</feature>
<feature type="binding site" evidence="2">
    <location>
        <position position="56"/>
    </location>
    <ligand>
        <name>[4Fe-4S] cluster</name>
        <dbReference type="ChEBI" id="CHEBI:49883"/>
        <label>1</label>
    </ligand>
</feature>
<feature type="binding site" evidence="2">
    <location>
        <position position="59"/>
    </location>
    <ligand>
        <name>[4Fe-4S] cluster</name>
        <dbReference type="ChEBI" id="CHEBI:49883"/>
        <label>1</label>
    </ligand>
</feature>
<feature type="binding site" evidence="2">
    <location>
        <position position="62"/>
    </location>
    <ligand>
        <name>[4Fe-4S] cluster</name>
        <dbReference type="ChEBI" id="CHEBI:49883"/>
        <label>1</label>
    </ligand>
</feature>
<feature type="binding site" evidence="2">
    <location>
        <position position="166"/>
    </location>
    <ligand>
        <name>[4Fe-4S] cluster</name>
        <dbReference type="ChEBI" id="CHEBI:49883"/>
        <label>2</label>
    </ligand>
</feature>
<feature type="binding site" evidence="2">
    <location>
        <position position="213"/>
    </location>
    <ligand>
        <name>[4Fe-4S] cluster</name>
        <dbReference type="ChEBI" id="CHEBI:49883"/>
        <label>2</label>
    </ligand>
</feature>
<feature type="binding site" evidence="2">
    <location>
        <position position="382"/>
    </location>
    <ligand>
        <name>[4Fe-4S] cluster</name>
        <dbReference type="ChEBI" id="CHEBI:49883"/>
        <label>2</label>
    </ligand>
</feature>
<feature type="binding site" evidence="2">
    <location>
        <position position="386"/>
    </location>
    <ligand>
        <name>[4Fe-4S] cluster</name>
        <dbReference type="ChEBI" id="CHEBI:49883"/>
        <label>2</label>
    </ligand>
</feature>
<keyword id="KW-0004">4Fe-4S</keyword>
<keyword id="KW-0408">Iron</keyword>
<keyword id="KW-0411">Iron-sulfur</keyword>
<keyword id="KW-0479">Metal-binding</keyword>
<keyword id="KW-1185">Reference proteome</keyword>
<evidence type="ECO:0000250" key="1"/>
<evidence type="ECO:0000255" key="2"/>
<evidence type="ECO:0000305" key="3"/>
<gene>
    <name type="primary">NAR1</name>
    <name type="ordered locus">ABL205C</name>
    <name type="ORF">AGOS_ABL205C</name>
</gene>
<comment type="function">
    <text evidence="1">Component of the cytosolic Fe/S protein assembly machinery. Required for maturation of extramitochondrial Fe/S proteins. May play a role in the transfer of pre-assembled Fe/S clusters to target apoproteins (By similarity).</text>
</comment>
<comment type="similarity">
    <text evidence="3">Belongs to the NARF family.</text>
</comment>
<sequence>MSAKLSESDLNDFIGAQVACVKPTRTLHTADEGDEALEVGKEPQEATKVSISLQDCLACAGCITSSEEILLSRQSHGVFLEAWRSLAPKALAVSVAPQSRLSLAQHFGLSVAELDQCLSGVLGSYFGAKYVVGTQLGRELSVQQTNARLVERKQQGVQGPLLCSVCPGFVLYAEKTKPGLVPYMLDVKSPQQITGALLHAADPNIYHLSLMPCFDKKLEAAREDCAREVDCVLTPREFVALLDELQLDLHSFAGAAVPIAQLTPPGWDPRVSWCSSAGSSSGGYAYQYILHMQRLHPGSTIATQAGRNADLLEHRLLAPSGVLLASAGELYGFRNIQNLVRKLLSPATKRSAKVVRRRLPQASPAPPATDPCNADFIEVMACPSGCINGGGLLNGGLGPSQRRDLVSQLNEGYARLPTLDIPMPTYSQPSYIYNLRPLAPTDDVLTVANAW</sequence>
<name>NAR1_EREGS</name>